<keyword id="KW-0238">DNA-binding</keyword>
<keyword id="KW-0255">Endonuclease</keyword>
<keyword id="KW-0378">Hydrolase</keyword>
<keyword id="KW-0460">Magnesium</keyword>
<keyword id="KW-0479">Metal-binding</keyword>
<keyword id="KW-0540">Nuclease</keyword>
<keyword id="KW-0630">Potassium</keyword>
<feature type="chain" id="PRO_1000138394" description="Flap endonuclease Xni">
    <location>
        <begin position="1"/>
        <end position="255"/>
    </location>
</feature>
<feature type="domain" description="5'-3' exonuclease" evidence="1">
    <location>
        <begin position="162"/>
        <end position="254"/>
    </location>
</feature>
<feature type="region of interest" description="Interaction with DNA" evidence="1">
    <location>
        <begin position="185"/>
        <end position="190"/>
    </location>
</feature>
<feature type="binding site" evidence="1">
    <location>
        <position position="105"/>
    </location>
    <ligand>
        <name>Mg(2+)</name>
        <dbReference type="ChEBI" id="CHEBI:18420"/>
    </ligand>
</feature>
<feature type="binding site" evidence="1">
    <location>
        <position position="172"/>
    </location>
    <ligand>
        <name>K(+)</name>
        <dbReference type="ChEBI" id="CHEBI:29103"/>
    </ligand>
</feature>
<feature type="binding site" evidence="1">
    <location>
        <position position="173"/>
    </location>
    <ligand>
        <name>K(+)</name>
        <dbReference type="ChEBI" id="CHEBI:29103"/>
    </ligand>
</feature>
<feature type="binding site" evidence="1">
    <location>
        <position position="181"/>
    </location>
    <ligand>
        <name>K(+)</name>
        <dbReference type="ChEBI" id="CHEBI:29103"/>
    </ligand>
</feature>
<feature type="binding site" evidence="1">
    <location>
        <position position="183"/>
    </location>
    <ligand>
        <name>K(+)</name>
        <dbReference type="ChEBI" id="CHEBI:29103"/>
    </ligand>
</feature>
<feature type="binding site" evidence="1">
    <location>
        <position position="186"/>
    </location>
    <ligand>
        <name>K(+)</name>
        <dbReference type="ChEBI" id="CHEBI:29103"/>
    </ligand>
</feature>
<comment type="function">
    <text evidence="1">Has flap endonuclease activity. During DNA replication, flap endonucleases cleave the 5'-overhanging flap structure that is generated by displacement synthesis when DNA polymerase encounters the 5'-end of a downstream Okazaki fragment.</text>
</comment>
<comment type="cofactor">
    <cofactor evidence="1">
        <name>Mg(2+)</name>
        <dbReference type="ChEBI" id="CHEBI:18420"/>
    </cofactor>
    <text evidence="1">Binds 2 Mg(2+) per subunit. Only one magnesium ion has a direct interaction with the protein, the other interactions are indirect.</text>
</comment>
<comment type="cofactor">
    <cofactor evidence="1">
        <name>K(+)</name>
        <dbReference type="ChEBI" id="CHEBI:29103"/>
    </cofactor>
    <text evidence="1">Binds 1 K(+) per subunit. The potassium ion strongly increases the affinity for DNA.</text>
</comment>
<comment type="similarity">
    <text evidence="1">Belongs to the Xni family.</text>
</comment>
<gene>
    <name evidence="1" type="primary">xni</name>
    <name evidence="1" type="synonym">ygdG</name>
    <name type="ordered locus">swp_3668</name>
</gene>
<dbReference type="EC" id="3.1.-.-" evidence="1"/>
<dbReference type="EMBL" id="CP000472">
    <property type="protein sequence ID" value="ACJ30355.1"/>
    <property type="molecule type" value="Genomic_DNA"/>
</dbReference>
<dbReference type="RefSeq" id="WP_020913700.1">
    <property type="nucleotide sequence ID" value="NC_011566.1"/>
</dbReference>
<dbReference type="SMR" id="B8CS65"/>
<dbReference type="STRING" id="225849.swp_3668"/>
<dbReference type="KEGG" id="swp:swp_3668"/>
<dbReference type="eggNOG" id="COG0258">
    <property type="taxonomic scope" value="Bacteria"/>
</dbReference>
<dbReference type="HOGENOM" id="CLU_004675_1_2_6"/>
<dbReference type="OrthoDB" id="8070997at2"/>
<dbReference type="Proteomes" id="UP000000753">
    <property type="component" value="Chromosome"/>
</dbReference>
<dbReference type="GO" id="GO:0008409">
    <property type="term" value="F:5'-3' exonuclease activity"/>
    <property type="evidence" value="ECO:0007669"/>
    <property type="project" value="InterPro"/>
</dbReference>
<dbReference type="GO" id="GO:0017108">
    <property type="term" value="F:5'-flap endonuclease activity"/>
    <property type="evidence" value="ECO:0007669"/>
    <property type="project" value="UniProtKB-UniRule"/>
</dbReference>
<dbReference type="GO" id="GO:0003677">
    <property type="term" value="F:DNA binding"/>
    <property type="evidence" value="ECO:0007669"/>
    <property type="project" value="UniProtKB-UniRule"/>
</dbReference>
<dbReference type="GO" id="GO:0000287">
    <property type="term" value="F:magnesium ion binding"/>
    <property type="evidence" value="ECO:0007669"/>
    <property type="project" value="UniProtKB-UniRule"/>
</dbReference>
<dbReference type="GO" id="GO:0030955">
    <property type="term" value="F:potassium ion binding"/>
    <property type="evidence" value="ECO:0007669"/>
    <property type="project" value="UniProtKB-UniRule"/>
</dbReference>
<dbReference type="GO" id="GO:0033567">
    <property type="term" value="P:DNA replication, Okazaki fragment processing"/>
    <property type="evidence" value="ECO:0007669"/>
    <property type="project" value="UniProtKB-UniRule"/>
</dbReference>
<dbReference type="CDD" id="cd09898">
    <property type="entry name" value="H3TH_53EXO"/>
    <property type="match status" value="1"/>
</dbReference>
<dbReference type="CDD" id="cd09859">
    <property type="entry name" value="PIN_53EXO"/>
    <property type="match status" value="1"/>
</dbReference>
<dbReference type="FunFam" id="1.10.150.20:FF:000003">
    <property type="entry name" value="DNA polymerase I"/>
    <property type="match status" value="1"/>
</dbReference>
<dbReference type="Gene3D" id="1.10.150.20">
    <property type="entry name" value="5' to 3' exonuclease, C-terminal subdomain"/>
    <property type="match status" value="1"/>
</dbReference>
<dbReference type="Gene3D" id="3.40.50.1010">
    <property type="entry name" value="5'-nuclease"/>
    <property type="match status" value="1"/>
</dbReference>
<dbReference type="HAMAP" id="MF_01192">
    <property type="entry name" value="Xni"/>
    <property type="match status" value="1"/>
</dbReference>
<dbReference type="InterPro" id="IPR020046">
    <property type="entry name" value="5-3_exonucl_a-hlix_arch_N"/>
</dbReference>
<dbReference type="InterPro" id="IPR002421">
    <property type="entry name" value="5-3_exonuclease"/>
</dbReference>
<dbReference type="InterPro" id="IPR036279">
    <property type="entry name" value="5-3_exonuclease_C_sf"/>
</dbReference>
<dbReference type="InterPro" id="IPR020045">
    <property type="entry name" value="DNA_polI_H3TH"/>
</dbReference>
<dbReference type="InterPro" id="IPR038969">
    <property type="entry name" value="FEN"/>
</dbReference>
<dbReference type="InterPro" id="IPR008918">
    <property type="entry name" value="HhH2"/>
</dbReference>
<dbReference type="InterPro" id="IPR029060">
    <property type="entry name" value="PIN-like_dom_sf"/>
</dbReference>
<dbReference type="InterPro" id="IPR022895">
    <property type="entry name" value="Xni"/>
</dbReference>
<dbReference type="NCBIfam" id="NF007017">
    <property type="entry name" value="PRK09482.1"/>
    <property type="match status" value="1"/>
</dbReference>
<dbReference type="PANTHER" id="PTHR42646:SF2">
    <property type="entry name" value="5'-3' EXONUCLEASE FAMILY PROTEIN"/>
    <property type="match status" value="1"/>
</dbReference>
<dbReference type="PANTHER" id="PTHR42646">
    <property type="entry name" value="FLAP ENDONUCLEASE XNI"/>
    <property type="match status" value="1"/>
</dbReference>
<dbReference type="Pfam" id="PF01367">
    <property type="entry name" value="5_3_exonuc"/>
    <property type="match status" value="1"/>
</dbReference>
<dbReference type="Pfam" id="PF02739">
    <property type="entry name" value="5_3_exonuc_N"/>
    <property type="match status" value="1"/>
</dbReference>
<dbReference type="SMART" id="SM00475">
    <property type="entry name" value="53EXOc"/>
    <property type="match status" value="1"/>
</dbReference>
<dbReference type="SMART" id="SM00279">
    <property type="entry name" value="HhH2"/>
    <property type="match status" value="1"/>
</dbReference>
<dbReference type="SUPFAM" id="SSF47807">
    <property type="entry name" value="5' to 3' exonuclease, C-terminal subdomain"/>
    <property type="match status" value="1"/>
</dbReference>
<dbReference type="SUPFAM" id="SSF88723">
    <property type="entry name" value="PIN domain-like"/>
    <property type="match status" value="1"/>
</dbReference>
<accession>B8CS65</accession>
<protein>
    <recommendedName>
        <fullName evidence="1">Flap endonuclease Xni</fullName>
        <shortName evidence="1">FEN</shortName>
        <ecNumber evidence="1">3.1.-.-</ecNumber>
    </recommendedName>
</protein>
<organism>
    <name type="scientific">Shewanella piezotolerans (strain WP3 / JCM 13877)</name>
    <dbReference type="NCBI Taxonomy" id="225849"/>
    <lineage>
        <taxon>Bacteria</taxon>
        <taxon>Pseudomonadati</taxon>
        <taxon>Pseudomonadota</taxon>
        <taxon>Gammaproteobacteria</taxon>
        <taxon>Alteromonadales</taxon>
        <taxon>Shewanellaceae</taxon>
        <taxon>Shewanella</taxon>
    </lineage>
</organism>
<proteinExistence type="inferred from homology"/>
<reference key="1">
    <citation type="journal article" date="2008" name="PLoS ONE">
        <title>Environmental adaptation: genomic analysis of the piezotolerant and psychrotolerant deep-sea iron reducing bacterium Shewanella piezotolerans WP3.</title>
        <authorList>
            <person name="Wang F."/>
            <person name="Wang J."/>
            <person name="Jian H."/>
            <person name="Zhang B."/>
            <person name="Li S."/>
            <person name="Wang F."/>
            <person name="Zeng X."/>
            <person name="Gao L."/>
            <person name="Bartlett D.H."/>
            <person name="Yu J."/>
            <person name="Hu S."/>
            <person name="Xiao X."/>
        </authorList>
    </citation>
    <scope>NUCLEOTIDE SEQUENCE [LARGE SCALE GENOMIC DNA]</scope>
    <source>
        <strain>WP3 / JCM 13877</strain>
    </source>
</reference>
<evidence type="ECO:0000255" key="1">
    <source>
        <dbReference type="HAMAP-Rule" id="MF_01192"/>
    </source>
</evidence>
<name>XNI_SHEPW</name>
<sequence>MNKFLILDGMNLVRRIHAAQPNEADISGLKERVHGACKKLLKFHQPSHVAIVWDGNAISWRKALYEDYKKGRKPMPEALSNGLGDIKSYLAEHHIASLEADSEADDVIATLATKLVSIGGEAIIVSTDKGFCQLKHPNIKQWDHFNQTYMTVEAMEQKLGVEHKQFIDYLALAGDSGNKIPGVPGIGPKSAVELLKIFRSLANIYSSIEQVGSKQAKKLEAGKHLARLSYKLVQLQLDMPLNANLKQFRLPKANS</sequence>